<feature type="chain" id="PRO_0000337057" description="Probable inactive 1-aminocyclopropane-1-carboxylate synthase-like protein 2">
    <location>
        <begin position="1"/>
        <end position="568"/>
    </location>
</feature>
<feature type="region of interest" description="Disordered" evidence="2">
    <location>
        <begin position="1"/>
        <end position="21"/>
    </location>
</feature>
<feature type="modified residue" description="N6-(pyridoxal phosphate)lysine" evidence="1">
    <location>
        <position position="395"/>
    </location>
</feature>
<feature type="sequence variant" id="VAR_060626" description="In dbSNP:rs2074051." evidence="3">
    <original>C</original>
    <variation>R</variation>
    <location>
        <position position="529"/>
    </location>
</feature>
<feature type="sequence conflict" description="In Ref. 1; BAE17132." evidence="4" ref="1">
    <original>S</original>
    <variation>R</variation>
    <location>
        <position position="192"/>
    </location>
</feature>
<feature type="sequence conflict" description="In Ref. 1; BAE17132." evidence="4" ref="1">
    <original>F</original>
    <variation>S</variation>
    <location>
        <position position="272"/>
    </location>
</feature>
<feature type="sequence conflict" description="In Ref. 1; BAE17132." evidence="4" ref="1">
    <original>L</original>
    <variation>P</variation>
    <location>
        <position position="276"/>
    </location>
</feature>
<feature type="sequence conflict" description="In Ref. 1; BAE17132." evidence="4" ref="1">
    <original>L</original>
    <variation>P</variation>
    <location>
        <position position="311"/>
    </location>
</feature>
<feature type="sequence conflict" description="In Ref. 1; BAE17132." evidence="4" ref="1">
    <original>K</original>
    <variation>E</variation>
    <location>
        <position position="434"/>
    </location>
</feature>
<feature type="sequence conflict" description="In Ref. 1; BAE17132." evidence="4" ref="1">
    <original>C</original>
    <variation>R</variation>
    <location>
        <position position="454"/>
    </location>
</feature>
<organism>
    <name type="scientific">Homo sapiens</name>
    <name type="common">Human</name>
    <dbReference type="NCBI Taxonomy" id="9606"/>
    <lineage>
        <taxon>Eukaryota</taxon>
        <taxon>Metazoa</taxon>
        <taxon>Chordata</taxon>
        <taxon>Craniata</taxon>
        <taxon>Vertebrata</taxon>
        <taxon>Euteleostomi</taxon>
        <taxon>Mammalia</taxon>
        <taxon>Eutheria</taxon>
        <taxon>Euarchontoglires</taxon>
        <taxon>Primates</taxon>
        <taxon>Haplorrhini</taxon>
        <taxon>Catarrhini</taxon>
        <taxon>Hominidae</taxon>
        <taxon>Homo</taxon>
    </lineage>
</organism>
<name>1A1L2_HUMAN</name>
<gene>
    <name type="primary">ACCSL</name>
</gene>
<keyword id="KW-1267">Proteomics identification</keyword>
<keyword id="KW-0663">Pyridoxal phosphate</keyword>
<keyword id="KW-1185">Reference proteome</keyword>
<sequence>MSHRSDTLPVPSGQRRGRVPRDHSIYTQLLEITLHLQQAMTEHFVQLTSRQGLSLEERRHTEAICEHEALLSRLICRMINLLQSGAASGLELQVPLPSEDSRGDVRYGQRAQLSGQPDPVPQLSDCEAAFVNRDLSIRGIDISVFYQSSFQDYNAYQKDKYHKDKNTLGFINLGTSENKLCMDLMTERLQESDMNCIEDTLLQYPDWRGQPFLREEVARFLTYYCRAPTRLDPENVVVLNGCCSVFCALAMVLCDPGEAFLVPAPFYGGFAFSSRLYAKVELIPVHLESEVTVTNTHPFQLTVDKLEEALLEARLEGKKVRGLVLINPQNPLGDIYSPDSLMKYLEFAKRYNLHVIIDEIYMLSVFDESITFHSILSMKSLPDSNRTHVIWGTSKDFGISGFRFGALYTHNKEVASAVSAFGYLHSISGITQHKLCQLLQNTEWIDKVYLPTNCYRLREAHKYITAELKALEIPFHNRSSGLYVWINLKKYLDPCTFEEERLLYCRFLDNKLLLSRGKTYMCKEPGWFCLIFADELPRLKLAMRRFCDVLQEQKEALIVKQLEDAMRE</sequence>
<evidence type="ECO:0000250" key="1"/>
<evidence type="ECO:0000256" key="2">
    <source>
        <dbReference type="SAM" id="MobiDB-lite"/>
    </source>
</evidence>
<evidence type="ECO:0000269" key="3">
    <source ref="1"/>
</evidence>
<evidence type="ECO:0000305" key="4"/>
<comment type="similarity">
    <text evidence="4">Belongs to the class-I pyridoxal-phosphate-dependent aminotransferase family.</text>
</comment>
<comment type="caution">
    <text evidence="4">While belonging to the class-I pyridoxal-phosphate-dependent aminotransferase family, it lacks a number of residues which are necessary for activity thus suggesting that it lacks enzymatic activity.</text>
</comment>
<protein>
    <recommendedName>
        <fullName>Probable inactive 1-aminocyclopropane-1-carboxylate synthase-like protein 2</fullName>
        <shortName>ACC synthase-like protein 2</shortName>
    </recommendedName>
</protein>
<accession>Q4AC99</accession>
<reference key="1">
    <citation type="submission" date="2005-08" db="EMBL/GenBank/DDBJ databases">
        <title>Identification of novel human genes predicted by combining multiple gene-finders.</title>
        <authorList>
            <person name="Totoki Y."/>
            <person name="Yada T."/>
            <person name="Sakaki Y."/>
            <person name="Takeda T."/>
        </authorList>
    </citation>
    <scope>NUCLEOTIDE SEQUENCE [LARGE SCALE MRNA]</scope>
    <scope>VARIANT ARG-529</scope>
</reference>
<reference key="2">
    <citation type="journal article" date="2006" name="Nature">
        <title>Human chromosome 11 DNA sequence and analysis including novel gene identification.</title>
        <authorList>
            <person name="Taylor T.D."/>
            <person name="Noguchi H."/>
            <person name="Totoki Y."/>
            <person name="Toyoda A."/>
            <person name="Kuroki Y."/>
            <person name="Dewar K."/>
            <person name="Lloyd C."/>
            <person name="Itoh T."/>
            <person name="Takeda T."/>
            <person name="Kim D.-W."/>
            <person name="She X."/>
            <person name="Barlow K.F."/>
            <person name="Bloom T."/>
            <person name="Bruford E."/>
            <person name="Chang J.L."/>
            <person name="Cuomo C.A."/>
            <person name="Eichler E."/>
            <person name="FitzGerald M.G."/>
            <person name="Jaffe D.B."/>
            <person name="LaButti K."/>
            <person name="Nicol R."/>
            <person name="Park H.-S."/>
            <person name="Seaman C."/>
            <person name="Sougnez C."/>
            <person name="Yang X."/>
            <person name="Zimmer A.R."/>
            <person name="Zody M.C."/>
            <person name="Birren B.W."/>
            <person name="Nusbaum C."/>
            <person name="Fujiyama A."/>
            <person name="Hattori M."/>
            <person name="Rogers J."/>
            <person name="Lander E.S."/>
            <person name="Sakaki Y."/>
        </authorList>
    </citation>
    <scope>NUCLEOTIDE SEQUENCE [LARGE SCALE GENOMIC DNA]</scope>
</reference>
<dbReference type="EMBL" id="AB231734">
    <property type="protein sequence ID" value="BAE17132.1"/>
    <property type="molecule type" value="mRNA"/>
</dbReference>
<dbReference type="EMBL" id="AC134775">
    <property type="status" value="NOT_ANNOTATED_CDS"/>
    <property type="molecule type" value="Genomic_DNA"/>
</dbReference>
<dbReference type="CCDS" id="CCDS41636.1"/>
<dbReference type="RefSeq" id="NP_001027025.2">
    <property type="nucleotide sequence ID" value="NM_001031854.2"/>
</dbReference>
<dbReference type="SMR" id="Q4AC99"/>
<dbReference type="BioGRID" id="133403">
    <property type="interactions" value="1"/>
</dbReference>
<dbReference type="FunCoup" id="Q4AC99">
    <property type="interactions" value="11"/>
</dbReference>
<dbReference type="STRING" id="9606.ENSP00000368109"/>
<dbReference type="iPTMnet" id="Q4AC99"/>
<dbReference type="PhosphoSitePlus" id="Q4AC99"/>
<dbReference type="SwissPalm" id="Q4AC99"/>
<dbReference type="BioMuta" id="ACCSL"/>
<dbReference type="DMDM" id="296439453"/>
<dbReference type="jPOST" id="Q4AC99"/>
<dbReference type="MassIVE" id="Q4AC99"/>
<dbReference type="PaxDb" id="9606-ENSP00000368109"/>
<dbReference type="PeptideAtlas" id="Q4AC99"/>
<dbReference type="Antibodypedia" id="26088">
    <property type="antibodies" value="45 antibodies from 16 providers"/>
</dbReference>
<dbReference type="DNASU" id="390110"/>
<dbReference type="Ensembl" id="ENST00000378832.1">
    <property type="protein sequence ID" value="ENSP00000368109.1"/>
    <property type="gene ID" value="ENSG00000205126.2"/>
</dbReference>
<dbReference type="GeneID" id="390110"/>
<dbReference type="KEGG" id="hsa:390110"/>
<dbReference type="MANE-Select" id="ENST00000378832.1">
    <property type="protein sequence ID" value="ENSP00000368109.1"/>
    <property type="RefSeq nucleotide sequence ID" value="NM_001031854.2"/>
    <property type="RefSeq protein sequence ID" value="NP_001027025.2"/>
</dbReference>
<dbReference type="UCSC" id="uc001mxw.1">
    <property type="organism name" value="human"/>
</dbReference>
<dbReference type="AGR" id="HGNC:34391"/>
<dbReference type="CTD" id="390110"/>
<dbReference type="DisGeNET" id="390110"/>
<dbReference type="GeneCards" id="ACCSL"/>
<dbReference type="HGNC" id="HGNC:34391">
    <property type="gene designation" value="ACCSL"/>
</dbReference>
<dbReference type="HPA" id="ENSG00000205126">
    <property type="expression patterns" value="Not detected"/>
</dbReference>
<dbReference type="neXtProt" id="NX_Q4AC99"/>
<dbReference type="PharmGKB" id="PA164714805"/>
<dbReference type="VEuPathDB" id="HostDB:ENSG00000205126"/>
<dbReference type="eggNOG" id="KOG0256">
    <property type="taxonomic scope" value="Eukaryota"/>
</dbReference>
<dbReference type="GeneTree" id="ENSGT00940000162841"/>
<dbReference type="HOGENOM" id="CLU_017584_1_3_1"/>
<dbReference type="InParanoid" id="Q4AC99"/>
<dbReference type="OMA" id="HIAQKCL"/>
<dbReference type="OrthoDB" id="691673at2759"/>
<dbReference type="PAN-GO" id="Q4AC99">
    <property type="GO annotations" value="2 GO annotations based on evolutionary models"/>
</dbReference>
<dbReference type="PhylomeDB" id="Q4AC99"/>
<dbReference type="TreeFam" id="TF354218"/>
<dbReference type="PathwayCommons" id="Q4AC99"/>
<dbReference type="SignaLink" id="Q4AC99"/>
<dbReference type="BioGRID-ORCS" id="390110">
    <property type="hits" value="9 hits in 1135 CRISPR screens"/>
</dbReference>
<dbReference type="ChiTaRS" id="ACCSL">
    <property type="organism name" value="human"/>
</dbReference>
<dbReference type="GenomeRNAi" id="390110"/>
<dbReference type="Pharos" id="Q4AC99">
    <property type="development level" value="Tdark"/>
</dbReference>
<dbReference type="PRO" id="PR:Q4AC99"/>
<dbReference type="Proteomes" id="UP000005640">
    <property type="component" value="Chromosome 11"/>
</dbReference>
<dbReference type="RNAct" id="Q4AC99">
    <property type="molecule type" value="protein"/>
</dbReference>
<dbReference type="Bgee" id="ENSG00000205126">
    <property type="expression patterns" value="Expressed in male germ line stem cell (sensu Vertebrata) in testis and 12 other cell types or tissues"/>
</dbReference>
<dbReference type="ExpressionAtlas" id="Q4AC99">
    <property type="expression patterns" value="baseline and differential"/>
</dbReference>
<dbReference type="GO" id="GO:0030170">
    <property type="term" value="F:pyridoxal phosphate binding"/>
    <property type="evidence" value="ECO:0007669"/>
    <property type="project" value="InterPro"/>
</dbReference>
<dbReference type="GO" id="GO:0008483">
    <property type="term" value="F:transaminase activity"/>
    <property type="evidence" value="ECO:0000318"/>
    <property type="project" value="GO_Central"/>
</dbReference>
<dbReference type="GO" id="GO:0006520">
    <property type="term" value="P:amino acid metabolic process"/>
    <property type="evidence" value="ECO:0000318"/>
    <property type="project" value="GO_Central"/>
</dbReference>
<dbReference type="GO" id="GO:0009058">
    <property type="term" value="P:biosynthetic process"/>
    <property type="evidence" value="ECO:0007669"/>
    <property type="project" value="InterPro"/>
</dbReference>
<dbReference type="CDD" id="cd00609">
    <property type="entry name" value="AAT_like"/>
    <property type="match status" value="1"/>
</dbReference>
<dbReference type="Gene3D" id="3.90.1150.10">
    <property type="entry name" value="Aspartate Aminotransferase, domain 1"/>
    <property type="match status" value="1"/>
</dbReference>
<dbReference type="Gene3D" id="3.40.640.10">
    <property type="entry name" value="Type I PLP-dependent aspartate aminotransferase-like (Major domain)"/>
    <property type="match status" value="1"/>
</dbReference>
<dbReference type="InterPro" id="IPR004839">
    <property type="entry name" value="Aminotransferase_I/II_large"/>
</dbReference>
<dbReference type="InterPro" id="IPR050478">
    <property type="entry name" value="Ethylene_sulfur-biosynth"/>
</dbReference>
<dbReference type="InterPro" id="IPR015424">
    <property type="entry name" value="PyrdxlP-dep_Trfase"/>
</dbReference>
<dbReference type="InterPro" id="IPR015421">
    <property type="entry name" value="PyrdxlP-dep_Trfase_major"/>
</dbReference>
<dbReference type="InterPro" id="IPR015422">
    <property type="entry name" value="PyrdxlP-dep_Trfase_small"/>
</dbReference>
<dbReference type="PANTHER" id="PTHR43795">
    <property type="entry name" value="BIFUNCTIONAL ASPARTATE AMINOTRANSFERASE AND GLUTAMATE/ASPARTATE-PREPHENATE AMINOTRANSFERASE-RELATED"/>
    <property type="match status" value="1"/>
</dbReference>
<dbReference type="PANTHER" id="PTHR43795:SF1">
    <property type="entry name" value="INACTIVE 1-AMINOCYCLOPROPANE-1-CARBOXYLATE SYNTHASE-LIKE PROTEIN 2-RELATED"/>
    <property type="match status" value="1"/>
</dbReference>
<dbReference type="Pfam" id="PF00155">
    <property type="entry name" value="Aminotran_1_2"/>
    <property type="match status" value="1"/>
</dbReference>
<dbReference type="PRINTS" id="PR00753">
    <property type="entry name" value="ACCSYNTHASE"/>
</dbReference>
<dbReference type="SUPFAM" id="SSF53383">
    <property type="entry name" value="PLP-dependent transferases"/>
    <property type="match status" value="1"/>
</dbReference>
<proteinExistence type="evidence at protein level"/>